<reference evidence="9" key="1">
    <citation type="journal article" date="2002" name="J. Anim. Sci.">
        <title>Rapid communication: nucleotide sequence and physical mapping of the porcine cyclin-dependent kinase inhibitor 3 (CDKN3) gene.</title>
        <authorList>
            <person name="Maak S."/>
            <person name="Jaesert S."/>
            <person name="Neumann K."/>
            <person name="von Lengerken G."/>
        </authorList>
    </citation>
    <scope>NUCLEOTIDE SEQUENCE [GENOMIC DNA / MRNA]</scope>
    <source>
        <tissue evidence="5">Thigh muscle</tissue>
    </source>
</reference>
<reference evidence="8" key="2">
    <citation type="journal article" date="2003" name="Genet. Sel. Evol.">
        <title>Characterization of the porcine CDKN3 gene as a potential candidate for congenital splay leg in piglets.</title>
        <authorList>
            <person name="Maak S."/>
            <person name="Jaesert S."/>
            <person name="Neumann K."/>
            <person name="von Lengerken G."/>
        </authorList>
    </citation>
    <scope>VARIANTS VAL-6; CYS-39; PHE-60; CYS-76; SER-78 AND GLY-79</scope>
</reference>
<protein>
    <recommendedName>
        <fullName evidence="1 7 10">Cyclin-dependent kinase inhibitor 3</fullName>
        <ecNumber>3.1.3.16</ecNumber>
        <ecNumber>3.1.3.48</ecNumber>
    </recommendedName>
    <alternativeName>
        <fullName evidence="1 7">CDK2-associated dual-specificity phosphatase</fullName>
    </alternativeName>
    <alternativeName>
        <fullName evidence="1">Kinase-associated phosphatase</fullName>
    </alternativeName>
</protein>
<proteinExistence type="evidence at transcript level"/>
<keyword id="KW-0131">Cell cycle</keyword>
<keyword id="KW-0963">Cytoplasm</keyword>
<keyword id="KW-0378">Hydrolase</keyword>
<keyword id="KW-0904">Protein phosphatase</keyword>
<keyword id="KW-1185">Reference proteome</keyword>
<evidence type="ECO:0000250" key="1">
    <source>
        <dbReference type="UniProtKB" id="Q16667"/>
    </source>
</evidence>
<evidence type="ECO:0000255" key="2"/>
<evidence type="ECO:0000255" key="3">
    <source>
        <dbReference type="PROSITE-ProRule" id="PRU00160"/>
    </source>
</evidence>
<evidence type="ECO:0000256" key="4">
    <source>
        <dbReference type="SAM" id="MobiDB-lite"/>
    </source>
</evidence>
<evidence type="ECO:0000269" key="5">
    <source>
    </source>
</evidence>
<evidence type="ECO:0000269" key="6">
    <source>
    </source>
</evidence>
<evidence type="ECO:0000303" key="7">
    <source>
    </source>
</evidence>
<evidence type="ECO:0000305" key="8"/>
<evidence type="ECO:0000312" key="9">
    <source>
        <dbReference type="EMBL" id="CAB97522.1"/>
    </source>
</evidence>
<evidence type="ECO:0000312" key="10">
    <source>
        <dbReference type="EMBL" id="CAB98135.1"/>
    </source>
</evidence>
<feature type="chain" id="PRO_0000396638" description="Cyclin-dependent kinase inhibitor 3">
    <location>
        <begin position="1"/>
        <end position="212"/>
    </location>
</feature>
<feature type="domain" description="Tyrosine-protein phosphatase" evidence="3">
    <location>
        <begin position="32"/>
        <end position="201"/>
    </location>
</feature>
<feature type="region of interest" description="Interaction with CDK2" evidence="1">
    <location>
        <begin position="1"/>
        <end position="34"/>
    </location>
</feature>
<feature type="region of interest" description="Disordered" evidence="4">
    <location>
        <begin position="1"/>
        <end position="23"/>
    </location>
</feature>
<feature type="compositionally biased region" description="Polar residues" evidence="4">
    <location>
        <begin position="1"/>
        <end position="12"/>
    </location>
</feature>
<feature type="compositionally biased region" description="Acidic residues" evidence="4">
    <location>
        <begin position="13"/>
        <end position="23"/>
    </location>
</feature>
<feature type="active site" description="Phosphocysteine intermediate" evidence="3">
    <location>
        <position position="140"/>
    </location>
</feature>
<feature type="sequence variant" evidence="6">
    <original>S</original>
    <variation>V</variation>
    <location>
        <position position="6"/>
    </location>
</feature>
<feature type="sequence variant" evidence="6">
    <original>Y</original>
    <variation>C</variation>
    <location>
        <position position="39"/>
    </location>
</feature>
<feature type="sequence variant" evidence="6">
    <original>I</original>
    <variation>F</variation>
    <location>
        <position position="60"/>
    </location>
</feature>
<feature type="sequence variant" evidence="6">
    <original>F</original>
    <variation>C</variation>
    <location>
        <position position="76"/>
    </location>
</feature>
<feature type="sequence variant" evidence="6">
    <original>F</original>
    <variation>S</variation>
    <location>
        <position position="78"/>
    </location>
</feature>
<feature type="sequence variant" evidence="6">
    <original>C</original>
    <variation>G</variation>
    <location>
        <position position="79"/>
    </location>
</feature>
<gene>
    <name evidence="10" type="primary">CDKN3</name>
    <name evidence="1" type="synonym">KAP</name>
</gene>
<accession>Q9MYN5</accession>
<dbReference type="EC" id="3.1.3.16"/>
<dbReference type="EC" id="3.1.3.48"/>
<dbReference type="EMBL" id="AJ404882">
    <property type="protein sequence ID" value="CAB97522.1"/>
    <property type="molecule type" value="mRNA"/>
</dbReference>
<dbReference type="EMBL" id="AJ404883">
    <property type="protein sequence ID" value="CAB98135.1"/>
    <property type="molecule type" value="Genomic_DNA"/>
</dbReference>
<dbReference type="EMBL" id="AJ404884">
    <property type="protein sequence ID" value="CAB98135.1"/>
    <property type="status" value="JOINED"/>
    <property type="molecule type" value="Genomic_DNA"/>
</dbReference>
<dbReference type="RefSeq" id="NP_999485.1">
    <property type="nucleotide sequence ID" value="NM_214320.1"/>
</dbReference>
<dbReference type="RefSeq" id="XP_013842063.1">
    <property type="nucleotide sequence ID" value="XM_013986609.1"/>
</dbReference>
<dbReference type="SMR" id="Q9MYN5"/>
<dbReference type="FunCoup" id="Q9MYN5">
    <property type="interactions" value="180"/>
</dbReference>
<dbReference type="STRING" id="9823.ENSSSCP00000060429"/>
<dbReference type="PaxDb" id="9823-ENSSSCP00000019951"/>
<dbReference type="GeneID" id="397589"/>
<dbReference type="KEGG" id="ssc:397589"/>
<dbReference type="CTD" id="1033"/>
<dbReference type="eggNOG" id="KOG1720">
    <property type="taxonomic scope" value="Eukaryota"/>
</dbReference>
<dbReference type="InParanoid" id="Q9MYN5"/>
<dbReference type="OrthoDB" id="19045at2759"/>
<dbReference type="PRO" id="PR:Q9MYN5"/>
<dbReference type="Proteomes" id="UP000008227">
    <property type="component" value="Unplaced"/>
</dbReference>
<dbReference type="Proteomes" id="UP000314985">
    <property type="component" value="Unplaced"/>
</dbReference>
<dbReference type="Proteomes" id="UP000694570">
    <property type="component" value="Unplaced"/>
</dbReference>
<dbReference type="Proteomes" id="UP000694571">
    <property type="component" value="Unplaced"/>
</dbReference>
<dbReference type="Proteomes" id="UP000694720">
    <property type="component" value="Unplaced"/>
</dbReference>
<dbReference type="Proteomes" id="UP000694722">
    <property type="component" value="Unplaced"/>
</dbReference>
<dbReference type="Proteomes" id="UP000694723">
    <property type="component" value="Unplaced"/>
</dbReference>
<dbReference type="Proteomes" id="UP000694724">
    <property type="component" value="Unplaced"/>
</dbReference>
<dbReference type="Proteomes" id="UP000694725">
    <property type="component" value="Unplaced"/>
</dbReference>
<dbReference type="Proteomes" id="UP000694726">
    <property type="component" value="Unplaced"/>
</dbReference>
<dbReference type="Proteomes" id="UP000694727">
    <property type="component" value="Unplaced"/>
</dbReference>
<dbReference type="Proteomes" id="UP000694728">
    <property type="component" value="Unplaced"/>
</dbReference>
<dbReference type="GO" id="GO:0005737">
    <property type="term" value="C:cytoplasm"/>
    <property type="evidence" value="ECO:0000318"/>
    <property type="project" value="GO_Central"/>
</dbReference>
<dbReference type="GO" id="GO:0005634">
    <property type="term" value="C:nucleus"/>
    <property type="evidence" value="ECO:0000318"/>
    <property type="project" value="GO_Central"/>
</dbReference>
<dbReference type="GO" id="GO:0048471">
    <property type="term" value="C:perinuclear region of cytoplasm"/>
    <property type="evidence" value="ECO:0000250"/>
    <property type="project" value="UniProtKB"/>
</dbReference>
<dbReference type="GO" id="GO:0004722">
    <property type="term" value="F:protein serine/threonine phosphatase activity"/>
    <property type="evidence" value="ECO:0007669"/>
    <property type="project" value="UniProtKB-EC"/>
</dbReference>
<dbReference type="GO" id="GO:0004725">
    <property type="term" value="F:protein tyrosine phosphatase activity"/>
    <property type="evidence" value="ECO:0000318"/>
    <property type="project" value="GO_Central"/>
</dbReference>
<dbReference type="CDD" id="cd14505">
    <property type="entry name" value="CDKN3-like"/>
    <property type="match status" value="1"/>
</dbReference>
<dbReference type="FunFam" id="3.90.190.10:FF:000046">
    <property type="entry name" value="Cyclin-dependent kinase inhibitor 3"/>
    <property type="match status" value="1"/>
</dbReference>
<dbReference type="Gene3D" id="3.90.190.10">
    <property type="entry name" value="Protein tyrosine phosphatase superfamily"/>
    <property type="match status" value="1"/>
</dbReference>
<dbReference type="InterPro" id="IPR008425">
    <property type="entry name" value="CDK_inhib_3"/>
</dbReference>
<dbReference type="InterPro" id="IPR022778">
    <property type="entry name" value="CDKN3"/>
</dbReference>
<dbReference type="InterPro" id="IPR029021">
    <property type="entry name" value="Prot-tyrosine_phosphatase-like"/>
</dbReference>
<dbReference type="InterPro" id="IPR050561">
    <property type="entry name" value="PTP"/>
</dbReference>
<dbReference type="InterPro" id="IPR003595">
    <property type="entry name" value="Tyr_Pase_cat"/>
</dbReference>
<dbReference type="InterPro" id="IPR000387">
    <property type="entry name" value="Tyr_Pase_dom"/>
</dbReference>
<dbReference type="InterPro" id="IPR020422">
    <property type="entry name" value="TYR_PHOSPHATASE_DUAL_dom"/>
</dbReference>
<dbReference type="PANTHER" id="PTHR23339">
    <property type="entry name" value="TYROSINE SPECIFIC PROTEIN PHOSPHATASE AND DUAL SPECIFICITY PROTEIN PHOSPHATASE"/>
    <property type="match status" value="1"/>
</dbReference>
<dbReference type="Pfam" id="PF05706">
    <property type="entry name" value="CDKN3"/>
    <property type="match status" value="1"/>
</dbReference>
<dbReference type="PIRSF" id="PIRSF037322">
    <property type="entry name" value="CDKN3"/>
    <property type="match status" value="1"/>
</dbReference>
<dbReference type="SMART" id="SM00404">
    <property type="entry name" value="PTPc_motif"/>
    <property type="match status" value="1"/>
</dbReference>
<dbReference type="SUPFAM" id="SSF52799">
    <property type="entry name" value="(Phosphotyrosine protein) phosphatases II"/>
    <property type="match status" value="1"/>
</dbReference>
<dbReference type="PROSITE" id="PS50056">
    <property type="entry name" value="TYR_PHOSPHATASE_2"/>
    <property type="match status" value="1"/>
</dbReference>
<dbReference type="PROSITE" id="PS50054">
    <property type="entry name" value="TYR_PHOSPHATASE_DUAL"/>
    <property type="match status" value="1"/>
</dbReference>
<organism>
    <name type="scientific">Sus scrofa</name>
    <name type="common">Pig</name>
    <dbReference type="NCBI Taxonomy" id="9823"/>
    <lineage>
        <taxon>Eukaryota</taxon>
        <taxon>Metazoa</taxon>
        <taxon>Chordata</taxon>
        <taxon>Craniata</taxon>
        <taxon>Vertebrata</taxon>
        <taxon>Euteleostomi</taxon>
        <taxon>Mammalia</taxon>
        <taxon>Eutheria</taxon>
        <taxon>Laurasiatheria</taxon>
        <taxon>Artiodactyla</taxon>
        <taxon>Suina</taxon>
        <taxon>Suidae</taxon>
        <taxon>Sus</taxon>
    </lineage>
</organism>
<comment type="function">
    <text evidence="1">May play a role in cell cycle regulation. Dual specificity phosphatase active toward substrates containing either phosphotyrosine or phosphoserine residues. Dephosphorylates CDK2 at 'Thr-160' in a cyclin-dependent manner (By similarity).</text>
</comment>
<comment type="catalytic activity">
    <reaction evidence="1">
        <text>O-phospho-L-tyrosyl-[protein] + H2O = L-tyrosyl-[protein] + phosphate</text>
        <dbReference type="Rhea" id="RHEA:10684"/>
        <dbReference type="Rhea" id="RHEA-COMP:10136"/>
        <dbReference type="Rhea" id="RHEA-COMP:20101"/>
        <dbReference type="ChEBI" id="CHEBI:15377"/>
        <dbReference type="ChEBI" id="CHEBI:43474"/>
        <dbReference type="ChEBI" id="CHEBI:46858"/>
        <dbReference type="ChEBI" id="CHEBI:61978"/>
        <dbReference type="EC" id="3.1.3.48"/>
    </reaction>
</comment>
<comment type="catalytic activity">
    <reaction>
        <text>O-phospho-L-seryl-[protein] + H2O = L-seryl-[protein] + phosphate</text>
        <dbReference type="Rhea" id="RHEA:20629"/>
        <dbReference type="Rhea" id="RHEA-COMP:9863"/>
        <dbReference type="Rhea" id="RHEA-COMP:11604"/>
        <dbReference type="ChEBI" id="CHEBI:15377"/>
        <dbReference type="ChEBI" id="CHEBI:29999"/>
        <dbReference type="ChEBI" id="CHEBI:43474"/>
        <dbReference type="ChEBI" id="CHEBI:83421"/>
        <dbReference type="EC" id="3.1.3.16"/>
    </reaction>
</comment>
<comment type="catalytic activity">
    <reaction>
        <text>O-phospho-L-threonyl-[protein] + H2O = L-threonyl-[protein] + phosphate</text>
        <dbReference type="Rhea" id="RHEA:47004"/>
        <dbReference type="Rhea" id="RHEA-COMP:11060"/>
        <dbReference type="Rhea" id="RHEA-COMP:11605"/>
        <dbReference type="ChEBI" id="CHEBI:15377"/>
        <dbReference type="ChEBI" id="CHEBI:30013"/>
        <dbReference type="ChEBI" id="CHEBI:43474"/>
        <dbReference type="ChEBI" id="CHEBI:61977"/>
        <dbReference type="EC" id="3.1.3.16"/>
    </reaction>
</comment>
<comment type="subunit">
    <text evidence="1">Interacts with cyclin-dependent kinases such as CDK1, CDK2 and CDK3. Does not interact with CDK4. Interacts (via C-terminus) with phosphorylated CDK2 (via C-terminal helix). Interacts with MS4A3 (via C-terminus); the interaction enhances CDKN3 enzymatic activity (By similarity).</text>
</comment>
<comment type="subcellular location">
    <subcellularLocation>
        <location evidence="1">Cytoplasm</location>
        <location evidence="1">Perinuclear region</location>
    </subcellularLocation>
</comment>
<comment type="similarity">
    <text evidence="2">Belongs to the protein-tyrosine phosphatase family.</text>
</comment>
<sequence length="212" mass="23906">MKPPSSIQTSEFDSSDEEPIEDEQTPIQISWLPLSRVNYSQFLGLCALPGCKFKDVRRNIQKDTEELKSCGIQDVFVFCTRGELSKYRVPNLLDLYHQYGIITHHHPIPDGGAPDIASCCEIMEELEICLQNNRKTLIHCYGGLGRSCLVAACLLLYLSDTVSPQQAIDSLRDLRGSGAIQTIKQYNYLHEFRDKLAAHLSSRESLSRSVSR</sequence>
<name>CDKN3_PIG</name>